<comment type="function">
    <text evidence="1">Catalyzes the NADPH-dependent reduction of glyoxylate and hydroxypyruvate into glycolate and glycerate, respectively.</text>
</comment>
<comment type="catalytic activity">
    <reaction evidence="1">
        <text>glycolate + NADP(+) = glyoxylate + NADPH + H(+)</text>
        <dbReference type="Rhea" id="RHEA:10992"/>
        <dbReference type="ChEBI" id="CHEBI:15378"/>
        <dbReference type="ChEBI" id="CHEBI:29805"/>
        <dbReference type="ChEBI" id="CHEBI:36655"/>
        <dbReference type="ChEBI" id="CHEBI:57783"/>
        <dbReference type="ChEBI" id="CHEBI:58349"/>
        <dbReference type="EC" id="1.1.1.79"/>
    </reaction>
</comment>
<comment type="catalytic activity">
    <reaction evidence="1">
        <text>(R)-glycerate + NAD(+) = 3-hydroxypyruvate + NADH + H(+)</text>
        <dbReference type="Rhea" id="RHEA:17905"/>
        <dbReference type="ChEBI" id="CHEBI:15378"/>
        <dbReference type="ChEBI" id="CHEBI:16659"/>
        <dbReference type="ChEBI" id="CHEBI:17180"/>
        <dbReference type="ChEBI" id="CHEBI:57540"/>
        <dbReference type="ChEBI" id="CHEBI:57945"/>
        <dbReference type="EC" id="1.1.1.81"/>
    </reaction>
</comment>
<comment type="catalytic activity">
    <reaction evidence="1">
        <text>(R)-glycerate + NADP(+) = 3-hydroxypyruvate + NADPH + H(+)</text>
        <dbReference type="Rhea" id="RHEA:18657"/>
        <dbReference type="ChEBI" id="CHEBI:15378"/>
        <dbReference type="ChEBI" id="CHEBI:16659"/>
        <dbReference type="ChEBI" id="CHEBI:17180"/>
        <dbReference type="ChEBI" id="CHEBI:57783"/>
        <dbReference type="ChEBI" id="CHEBI:58349"/>
        <dbReference type="EC" id="1.1.1.81"/>
    </reaction>
</comment>
<comment type="subunit">
    <text evidence="1">Homodimer.</text>
</comment>
<comment type="subcellular location">
    <subcellularLocation>
        <location evidence="1">Cytoplasm</location>
    </subcellularLocation>
</comment>
<comment type="similarity">
    <text evidence="1">Belongs to the D-isomer specific 2-hydroxyacid dehydrogenase family. GhrB subfamily.</text>
</comment>
<comment type="sequence caution" evidence="2">
    <conflict type="erroneous initiation">
        <sequence resource="EMBL-CDS" id="ABJ03036"/>
    </conflict>
</comment>
<proteinExistence type="inferred from homology"/>
<name>GHRB_ECOK1</name>
<evidence type="ECO:0000255" key="1">
    <source>
        <dbReference type="HAMAP-Rule" id="MF_01667"/>
    </source>
</evidence>
<evidence type="ECO:0000305" key="2"/>
<keyword id="KW-0963">Cytoplasm</keyword>
<keyword id="KW-0520">NAD</keyword>
<keyword id="KW-0521">NADP</keyword>
<keyword id="KW-0560">Oxidoreductase</keyword>
<keyword id="KW-1185">Reference proteome</keyword>
<sequence length="324" mass="35396">MKPSVILYKALPDDLLQRLQEHFTVHQVANLSPQTVEQNAAIFAEAEGLLGSNENVDAALLEKMPKLRATSTISVGYDNFDVDALTARKILLMHTPTVLTETVADTLMALVLSTARRVVEVAERVKAGEWTASIGPDWYGTDVHHKTLGIVGMGRIGMALAQRAHFGFNMPILYNARRHHKEAEERFNARYCDLDTLLQESDFVCLILPLTDETHHLFGAEQFAKMKSSAIFINAGRGPVVDENALIAALQKGEIHAAGLDVFEQEPLSVDSPLLSMANVVAVPHIGSATHETRYGMAACAVDNLIDALQGKVEKNCVNPHVAD</sequence>
<reference key="1">
    <citation type="journal article" date="2007" name="J. Bacteriol.">
        <title>The genome sequence of avian pathogenic Escherichia coli strain O1:K1:H7 shares strong similarities with human extraintestinal pathogenic E. coli genomes.</title>
        <authorList>
            <person name="Johnson T.J."/>
            <person name="Kariyawasam S."/>
            <person name="Wannemuehler Y."/>
            <person name="Mangiamele P."/>
            <person name="Johnson S.J."/>
            <person name="Doetkott C."/>
            <person name="Skyberg J.A."/>
            <person name="Lynne A.M."/>
            <person name="Johnson J.R."/>
            <person name="Nolan L.K."/>
        </authorList>
    </citation>
    <scope>NUCLEOTIDE SEQUENCE [LARGE SCALE GENOMIC DNA]</scope>
</reference>
<dbReference type="EC" id="1.1.1.79" evidence="1"/>
<dbReference type="EC" id="1.1.1.81" evidence="1"/>
<dbReference type="EMBL" id="CP000468">
    <property type="protein sequence ID" value="ABJ03036.1"/>
    <property type="status" value="ALT_INIT"/>
    <property type="molecule type" value="Genomic_DNA"/>
</dbReference>
<dbReference type="RefSeq" id="WP_000805027.1">
    <property type="nucleotide sequence ID" value="NZ_CADILS010000015.1"/>
</dbReference>
<dbReference type="SMR" id="A1AH96"/>
<dbReference type="GeneID" id="75203026"/>
<dbReference type="KEGG" id="ecv:APECO1_2895"/>
<dbReference type="HOGENOM" id="CLU_019796_1_2_6"/>
<dbReference type="Proteomes" id="UP000008216">
    <property type="component" value="Chromosome"/>
</dbReference>
<dbReference type="GO" id="GO:0005829">
    <property type="term" value="C:cytosol"/>
    <property type="evidence" value="ECO:0007669"/>
    <property type="project" value="UniProtKB-ARBA"/>
</dbReference>
<dbReference type="GO" id="GO:0005886">
    <property type="term" value="C:plasma membrane"/>
    <property type="evidence" value="ECO:0007669"/>
    <property type="project" value="UniProtKB-UniRule"/>
</dbReference>
<dbReference type="GO" id="GO:0030267">
    <property type="term" value="F:glyoxylate reductase (NADPH) activity"/>
    <property type="evidence" value="ECO:0007669"/>
    <property type="project" value="UniProtKB-UniRule"/>
</dbReference>
<dbReference type="GO" id="GO:0008465">
    <property type="term" value="F:hydroxypyruvate reductase (NADH) activity"/>
    <property type="evidence" value="ECO:0007669"/>
    <property type="project" value="RHEA"/>
</dbReference>
<dbReference type="GO" id="GO:0120509">
    <property type="term" value="F:hydroxypyruvate reductase (NADPH) activity"/>
    <property type="evidence" value="ECO:0007669"/>
    <property type="project" value="RHEA"/>
</dbReference>
<dbReference type="GO" id="GO:0051287">
    <property type="term" value="F:NAD binding"/>
    <property type="evidence" value="ECO:0007669"/>
    <property type="project" value="InterPro"/>
</dbReference>
<dbReference type="CDD" id="cd05301">
    <property type="entry name" value="GDH"/>
    <property type="match status" value="1"/>
</dbReference>
<dbReference type="FunFam" id="3.40.50.720:FF:000026">
    <property type="entry name" value="Glyoxylate/hydroxypyruvate reductase B"/>
    <property type="match status" value="1"/>
</dbReference>
<dbReference type="Gene3D" id="3.40.50.720">
    <property type="entry name" value="NAD(P)-binding Rossmann-like Domain"/>
    <property type="match status" value="2"/>
</dbReference>
<dbReference type="HAMAP" id="MF_01667">
    <property type="entry name" value="2_Hacid_dh_C_GhrB"/>
    <property type="match status" value="1"/>
</dbReference>
<dbReference type="InterPro" id="IPR050223">
    <property type="entry name" value="D-isomer_2-hydroxyacid_DH"/>
</dbReference>
<dbReference type="InterPro" id="IPR006139">
    <property type="entry name" value="D-isomer_2_OHA_DH_cat_dom"/>
</dbReference>
<dbReference type="InterPro" id="IPR029753">
    <property type="entry name" value="D-isomer_DH_CS"/>
</dbReference>
<dbReference type="InterPro" id="IPR006140">
    <property type="entry name" value="D-isomer_DH_NAD-bd"/>
</dbReference>
<dbReference type="InterPro" id="IPR023756">
    <property type="entry name" value="Glyo/OHPyrv_Rdtase_B"/>
</dbReference>
<dbReference type="InterPro" id="IPR036291">
    <property type="entry name" value="NAD(P)-bd_dom_sf"/>
</dbReference>
<dbReference type="NCBIfam" id="NF011938">
    <property type="entry name" value="PRK15409.1"/>
    <property type="match status" value="1"/>
</dbReference>
<dbReference type="PANTHER" id="PTHR10996">
    <property type="entry name" value="2-HYDROXYACID DEHYDROGENASE-RELATED"/>
    <property type="match status" value="1"/>
</dbReference>
<dbReference type="PANTHER" id="PTHR10996:SF283">
    <property type="entry name" value="GLYOXYLATE_HYDROXYPYRUVATE REDUCTASE B"/>
    <property type="match status" value="1"/>
</dbReference>
<dbReference type="Pfam" id="PF00389">
    <property type="entry name" value="2-Hacid_dh"/>
    <property type="match status" value="1"/>
</dbReference>
<dbReference type="Pfam" id="PF02826">
    <property type="entry name" value="2-Hacid_dh_C"/>
    <property type="match status" value="1"/>
</dbReference>
<dbReference type="SUPFAM" id="SSF52283">
    <property type="entry name" value="Formate/glycerate dehydrogenase catalytic domain-like"/>
    <property type="match status" value="1"/>
</dbReference>
<dbReference type="SUPFAM" id="SSF51735">
    <property type="entry name" value="NAD(P)-binding Rossmann-fold domains"/>
    <property type="match status" value="1"/>
</dbReference>
<dbReference type="PROSITE" id="PS00670">
    <property type="entry name" value="D_2_HYDROXYACID_DH_2"/>
    <property type="match status" value="1"/>
</dbReference>
<dbReference type="PROSITE" id="PS00671">
    <property type="entry name" value="D_2_HYDROXYACID_DH_3"/>
    <property type="match status" value="1"/>
</dbReference>
<organism>
    <name type="scientific">Escherichia coli O1:K1 / APEC</name>
    <dbReference type="NCBI Taxonomy" id="405955"/>
    <lineage>
        <taxon>Bacteria</taxon>
        <taxon>Pseudomonadati</taxon>
        <taxon>Pseudomonadota</taxon>
        <taxon>Gammaproteobacteria</taxon>
        <taxon>Enterobacterales</taxon>
        <taxon>Enterobacteriaceae</taxon>
        <taxon>Escherichia</taxon>
    </lineage>
</organism>
<accession>A1AH96</accession>
<feature type="chain" id="PRO_0000348388" description="Glyoxylate/hydroxypyruvate reductase B">
    <location>
        <begin position="1"/>
        <end position="324"/>
    </location>
</feature>
<feature type="active site" evidence="1">
    <location>
        <position position="237"/>
    </location>
</feature>
<feature type="active site" evidence="1">
    <location>
        <position position="266"/>
    </location>
</feature>
<feature type="active site" description="Proton donor" evidence="1">
    <location>
        <position position="285"/>
    </location>
</feature>
<protein>
    <recommendedName>
        <fullName evidence="1">Glyoxylate/hydroxypyruvate reductase B</fullName>
        <ecNumber evidence="1">1.1.1.79</ecNumber>
        <ecNumber evidence="1">1.1.1.81</ecNumber>
    </recommendedName>
</protein>
<gene>
    <name evidence="1" type="primary">ghrB</name>
    <name type="ordered locus">Ecok1_35420</name>
    <name type="ORF">APECO1_2895</name>
</gene>